<accession>A4SUT5</accession>
<keyword id="KW-0066">ATP synthesis</keyword>
<keyword id="KW-1003">Cell membrane</keyword>
<keyword id="KW-0139">CF(1)</keyword>
<keyword id="KW-0375">Hydrogen ion transport</keyword>
<keyword id="KW-0406">Ion transport</keyword>
<keyword id="KW-0472">Membrane</keyword>
<keyword id="KW-1185">Reference proteome</keyword>
<keyword id="KW-0813">Transport</keyword>
<comment type="function">
    <text evidence="1">Produces ATP from ADP in the presence of a proton gradient across the membrane.</text>
</comment>
<comment type="subunit">
    <text evidence="1">F-type ATPases have 2 components, CF(1) - the catalytic core - and CF(0) - the membrane proton channel. CF(1) has five subunits: alpha(3), beta(3), gamma(1), delta(1), epsilon(1). CF(0) has three main subunits: a, b and c.</text>
</comment>
<comment type="subcellular location">
    <subcellularLocation>
        <location evidence="1">Cell membrane</location>
        <topology evidence="1">Peripheral membrane protein</topology>
    </subcellularLocation>
</comment>
<comment type="similarity">
    <text evidence="1">Belongs to the ATPase epsilon chain family.</text>
</comment>
<reference key="1">
    <citation type="journal article" date="2012" name="Stand. Genomic Sci.">
        <title>Complete genome sequence of Polynucleobacter necessarius subsp. asymbioticus type strain (QLW-P1DMWA-1(T)).</title>
        <authorList>
            <person name="Meincke L."/>
            <person name="Copeland A."/>
            <person name="Lapidus A."/>
            <person name="Lucas S."/>
            <person name="Berry K.W."/>
            <person name="Del Rio T.G."/>
            <person name="Hammon N."/>
            <person name="Dalin E."/>
            <person name="Tice H."/>
            <person name="Pitluck S."/>
            <person name="Richardson P."/>
            <person name="Bruce D."/>
            <person name="Goodwin L."/>
            <person name="Han C."/>
            <person name="Tapia R."/>
            <person name="Detter J.C."/>
            <person name="Schmutz J."/>
            <person name="Brettin T."/>
            <person name="Larimer F."/>
            <person name="Land M."/>
            <person name="Hauser L."/>
            <person name="Kyrpides N.C."/>
            <person name="Ivanova N."/>
            <person name="Goker M."/>
            <person name="Woyke T."/>
            <person name="Wu Q.L."/>
            <person name="Pockl M."/>
            <person name="Hahn M.W."/>
            <person name="Klenk H.P."/>
        </authorList>
    </citation>
    <scope>NUCLEOTIDE SEQUENCE [LARGE SCALE GENOMIC DNA]</scope>
    <source>
        <strain>DSM 18221 / CIP 109841 / QLW-P1DMWA-1</strain>
    </source>
</reference>
<name>ATPE_POLAQ</name>
<evidence type="ECO:0000255" key="1">
    <source>
        <dbReference type="HAMAP-Rule" id="MF_00530"/>
    </source>
</evidence>
<sequence length="138" mass="15004">MSTIRVDVVSAEQSIFSGEAKFVALPGESGELGILRGHTPLITRIRPGSVRIEKADGDEEFVFVAGGYLEVQPDRVTVLADTAIRGHDLDEAKAIEAKKRAEEAMQNRGTDFDMALAQSEFAMAAAQLAAIARFRRKK</sequence>
<protein>
    <recommendedName>
        <fullName evidence="1">ATP synthase epsilon chain</fullName>
    </recommendedName>
    <alternativeName>
        <fullName evidence="1">ATP synthase F1 sector epsilon subunit</fullName>
    </alternativeName>
    <alternativeName>
        <fullName evidence="1">F-ATPase epsilon subunit</fullName>
    </alternativeName>
</protein>
<proteinExistence type="inferred from homology"/>
<feature type="chain" id="PRO_1000081740" description="ATP synthase epsilon chain">
    <location>
        <begin position="1"/>
        <end position="138"/>
    </location>
</feature>
<organism>
    <name type="scientific">Polynucleobacter asymbioticus (strain DSM 18221 / CIP 109841 / QLW-P1DMWA-1)</name>
    <name type="common">Polynucleobacter necessarius subsp. asymbioticus</name>
    <dbReference type="NCBI Taxonomy" id="312153"/>
    <lineage>
        <taxon>Bacteria</taxon>
        <taxon>Pseudomonadati</taxon>
        <taxon>Pseudomonadota</taxon>
        <taxon>Betaproteobacteria</taxon>
        <taxon>Burkholderiales</taxon>
        <taxon>Burkholderiaceae</taxon>
        <taxon>Polynucleobacter</taxon>
    </lineage>
</organism>
<gene>
    <name evidence="1" type="primary">atpC</name>
    <name type="ordered locus">Pnuc_0027</name>
</gene>
<dbReference type="EMBL" id="CP000655">
    <property type="protein sequence ID" value="ABP33249.1"/>
    <property type="molecule type" value="Genomic_DNA"/>
</dbReference>
<dbReference type="RefSeq" id="WP_011901875.1">
    <property type="nucleotide sequence ID" value="NC_009379.1"/>
</dbReference>
<dbReference type="SMR" id="A4SUT5"/>
<dbReference type="GeneID" id="31480363"/>
<dbReference type="KEGG" id="pnu:Pnuc_0027"/>
<dbReference type="eggNOG" id="COG0355">
    <property type="taxonomic scope" value="Bacteria"/>
</dbReference>
<dbReference type="HOGENOM" id="CLU_084338_2_0_4"/>
<dbReference type="Proteomes" id="UP000000231">
    <property type="component" value="Chromosome"/>
</dbReference>
<dbReference type="GO" id="GO:0005886">
    <property type="term" value="C:plasma membrane"/>
    <property type="evidence" value="ECO:0007669"/>
    <property type="project" value="UniProtKB-SubCell"/>
</dbReference>
<dbReference type="GO" id="GO:0045259">
    <property type="term" value="C:proton-transporting ATP synthase complex"/>
    <property type="evidence" value="ECO:0007669"/>
    <property type="project" value="UniProtKB-KW"/>
</dbReference>
<dbReference type="GO" id="GO:0005524">
    <property type="term" value="F:ATP binding"/>
    <property type="evidence" value="ECO:0007669"/>
    <property type="project" value="UniProtKB-UniRule"/>
</dbReference>
<dbReference type="GO" id="GO:0046933">
    <property type="term" value="F:proton-transporting ATP synthase activity, rotational mechanism"/>
    <property type="evidence" value="ECO:0007669"/>
    <property type="project" value="UniProtKB-UniRule"/>
</dbReference>
<dbReference type="CDD" id="cd12152">
    <property type="entry name" value="F1-ATPase_delta"/>
    <property type="match status" value="1"/>
</dbReference>
<dbReference type="FunFam" id="2.60.15.10:FF:000001">
    <property type="entry name" value="ATP synthase epsilon chain"/>
    <property type="match status" value="1"/>
</dbReference>
<dbReference type="Gene3D" id="1.20.5.440">
    <property type="entry name" value="ATP synthase delta/epsilon subunit, C-terminal domain"/>
    <property type="match status" value="1"/>
</dbReference>
<dbReference type="Gene3D" id="2.60.15.10">
    <property type="entry name" value="F0F1 ATP synthase delta/epsilon subunit, N-terminal"/>
    <property type="match status" value="1"/>
</dbReference>
<dbReference type="HAMAP" id="MF_00530">
    <property type="entry name" value="ATP_synth_epsil_bac"/>
    <property type="match status" value="1"/>
</dbReference>
<dbReference type="InterPro" id="IPR036794">
    <property type="entry name" value="ATP_F1_dsu/esu_C_sf"/>
</dbReference>
<dbReference type="InterPro" id="IPR001469">
    <property type="entry name" value="ATP_synth_F1_dsu/esu"/>
</dbReference>
<dbReference type="InterPro" id="IPR020546">
    <property type="entry name" value="ATP_synth_F1_dsu/esu_N"/>
</dbReference>
<dbReference type="InterPro" id="IPR020547">
    <property type="entry name" value="ATP_synth_F1_esu_C"/>
</dbReference>
<dbReference type="InterPro" id="IPR036771">
    <property type="entry name" value="ATPsynth_dsu/esu_N"/>
</dbReference>
<dbReference type="NCBIfam" id="TIGR01216">
    <property type="entry name" value="ATP_synt_epsi"/>
    <property type="match status" value="1"/>
</dbReference>
<dbReference type="NCBIfam" id="NF001847">
    <property type="entry name" value="PRK00571.1-4"/>
    <property type="match status" value="1"/>
</dbReference>
<dbReference type="NCBIfam" id="NF009977">
    <property type="entry name" value="PRK13442.1"/>
    <property type="match status" value="1"/>
</dbReference>
<dbReference type="PANTHER" id="PTHR13822">
    <property type="entry name" value="ATP SYNTHASE DELTA/EPSILON CHAIN"/>
    <property type="match status" value="1"/>
</dbReference>
<dbReference type="PANTHER" id="PTHR13822:SF10">
    <property type="entry name" value="ATP SYNTHASE EPSILON CHAIN, CHLOROPLASTIC"/>
    <property type="match status" value="1"/>
</dbReference>
<dbReference type="Pfam" id="PF00401">
    <property type="entry name" value="ATP-synt_DE"/>
    <property type="match status" value="1"/>
</dbReference>
<dbReference type="Pfam" id="PF02823">
    <property type="entry name" value="ATP-synt_DE_N"/>
    <property type="match status" value="1"/>
</dbReference>
<dbReference type="SUPFAM" id="SSF46604">
    <property type="entry name" value="Epsilon subunit of F1F0-ATP synthase C-terminal domain"/>
    <property type="match status" value="1"/>
</dbReference>
<dbReference type="SUPFAM" id="SSF51344">
    <property type="entry name" value="Epsilon subunit of F1F0-ATP synthase N-terminal domain"/>
    <property type="match status" value="1"/>
</dbReference>